<proteinExistence type="inferred from homology"/>
<evidence type="ECO:0000255" key="1">
    <source>
        <dbReference type="HAMAP-Rule" id="MF_00095"/>
    </source>
</evidence>
<keyword id="KW-1185">Reference proteome</keyword>
<accession>Q3B078</accession>
<organism>
    <name type="scientific">Synechococcus sp. (strain CC9902)</name>
    <dbReference type="NCBI Taxonomy" id="316279"/>
    <lineage>
        <taxon>Bacteria</taxon>
        <taxon>Bacillati</taxon>
        <taxon>Cyanobacteriota</taxon>
        <taxon>Cyanophyceae</taxon>
        <taxon>Synechococcales</taxon>
        <taxon>Synechococcaceae</taxon>
        <taxon>Synechococcus</taxon>
    </lineage>
</organism>
<reference key="1">
    <citation type="submission" date="2005-08" db="EMBL/GenBank/DDBJ databases">
        <title>Complete sequence of Synechococcus sp. CC9902.</title>
        <authorList>
            <person name="Copeland A."/>
            <person name="Lucas S."/>
            <person name="Lapidus A."/>
            <person name="Barry K."/>
            <person name="Detter J.C."/>
            <person name="Glavina T."/>
            <person name="Hammon N."/>
            <person name="Israni S."/>
            <person name="Pitluck S."/>
            <person name="Martinez M."/>
            <person name="Schmutz J."/>
            <person name="Larimer F."/>
            <person name="Land M."/>
            <person name="Kyrpides N."/>
            <person name="Ivanova N."/>
            <person name="Richardson P."/>
        </authorList>
    </citation>
    <scope>NUCLEOTIDE SEQUENCE [LARGE SCALE GENOMIC DNA]</scope>
    <source>
        <strain>CC9902</strain>
    </source>
</reference>
<gene>
    <name evidence="1" type="primary">sfsA</name>
    <name type="ordered locus">Syncc9902_0277</name>
</gene>
<protein>
    <recommendedName>
        <fullName evidence="1">Sugar fermentation stimulation protein homolog</fullName>
    </recommendedName>
</protein>
<sequence length="249" mass="27690">MPLLEFEPLQEGVLIKRYKRFLADIELSNGEVVTAHCANTGPMTGVLIPGQRVRLRHAPSPKRKLAWTWEQAEVPGADGQPCWAGINTALPNRLIRATIEAGCLSEQLGAISNIRAEVAYGTNRRSRIDLLLTPGESNPDQRLIYLEVKNTTWTDGTTALFPDTVTERGQKHLIELMGVLPEARAVLVPCLSRPDVMDFAPGDEADPRYGSLFRDALEAGVEVLPCCFRYQSNEISWQGLRPLKKFQNL</sequence>
<comment type="similarity">
    <text evidence="1">Belongs to the SfsA family.</text>
</comment>
<feature type="chain" id="PRO_0000340154" description="Sugar fermentation stimulation protein homolog">
    <location>
        <begin position="1"/>
        <end position="249"/>
    </location>
</feature>
<name>SFSA_SYNS9</name>
<dbReference type="EMBL" id="CP000097">
    <property type="protein sequence ID" value="ABB25250.1"/>
    <property type="molecule type" value="Genomic_DNA"/>
</dbReference>
<dbReference type="SMR" id="Q3B078"/>
<dbReference type="STRING" id="316279.Syncc9902_0277"/>
<dbReference type="KEGG" id="sye:Syncc9902_0277"/>
<dbReference type="eggNOG" id="COG1489">
    <property type="taxonomic scope" value="Bacteria"/>
</dbReference>
<dbReference type="HOGENOM" id="CLU_052299_2_0_3"/>
<dbReference type="OrthoDB" id="9802365at2"/>
<dbReference type="Proteomes" id="UP000002712">
    <property type="component" value="Chromosome"/>
</dbReference>
<dbReference type="GO" id="GO:0003677">
    <property type="term" value="F:DNA binding"/>
    <property type="evidence" value="ECO:0007669"/>
    <property type="project" value="InterPro"/>
</dbReference>
<dbReference type="CDD" id="cd22359">
    <property type="entry name" value="SfsA-like_bacterial"/>
    <property type="match status" value="1"/>
</dbReference>
<dbReference type="Gene3D" id="2.40.50.580">
    <property type="match status" value="1"/>
</dbReference>
<dbReference type="Gene3D" id="3.40.1350.60">
    <property type="match status" value="1"/>
</dbReference>
<dbReference type="HAMAP" id="MF_00095">
    <property type="entry name" value="SfsA"/>
    <property type="match status" value="1"/>
</dbReference>
<dbReference type="InterPro" id="IPR005224">
    <property type="entry name" value="SfsA"/>
</dbReference>
<dbReference type="InterPro" id="IPR040452">
    <property type="entry name" value="SfsA_C"/>
</dbReference>
<dbReference type="InterPro" id="IPR041465">
    <property type="entry name" value="SfsA_N"/>
</dbReference>
<dbReference type="NCBIfam" id="TIGR00230">
    <property type="entry name" value="sfsA"/>
    <property type="match status" value="1"/>
</dbReference>
<dbReference type="PANTHER" id="PTHR30545">
    <property type="entry name" value="SUGAR FERMENTATION STIMULATION PROTEIN A"/>
    <property type="match status" value="1"/>
</dbReference>
<dbReference type="PANTHER" id="PTHR30545:SF2">
    <property type="entry name" value="SUGAR FERMENTATION STIMULATION PROTEIN A"/>
    <property type="match status" value="1"/>
</dbReference>
<dbReference type="Pfam" id="PF03749">
    <property type="entry name" value="SfsA"/>
    <property type="match status" value="1"/>
</dbReference>
<dbReference type="Pfam" id="PF17746">
    <property type="entry name" value="SfsA_N"/>
    <property type="match status" value="1"/>
</dbReference>